<evidence type="ECO:0000250" key="1"/>
<evidence type="ECO:0000255" key="2"/>
<evidence type="ECO:0000305" key="3"/>
<name>MNHE1_STAA2</name>
<organism>
    <name type="scientific">Staphylococcus aureus (strain JH1)</name>
    <dbReference type="NCBI Taxonomy" id="359787"/>
    <lineage>
        <taxon>Bacteria</taxon>
        <taxon>Bacillati</taxon>
        <taxon>Bacillota</taxon>
        <taxon>Bacilli</taxon>
        <taxon>Bacillales</taxon>
        <taxon>Staphylococcaceae</taxon>
        <taxon>Staphylococcus</taxon>
    </lineage>
</organism>
<feature type="chain" id="PRO_0000372142" description="Na(+)/H(+) antiporter subunit E1">
    <location>
        <begin position="1"/>
        <end position="159"/>
    </location>
</feature>
<feature type="transmembrane region" description="Helical" evidence="2">
    <location>
        <begin position="1"/>
        <end position="21"/>
    </location>
</feature>
<feature type="transmembrane region" description="Helical" evidence="2">
    <location>
        <begin position="27"/>
        <end position="47"/>
    </location>
</feature>
<feature type="transmembrane region" description="Helical" evidence="2">
    <location>
        <begin position="49"/>
        <end position="69"/>
    </location>
</feature>
<feature type="transmembrane region" description="Helical" evidence="2">
    <location>
        <begin position="101"/>
        <end position="121"/>
    </location>
</feature>
<proteinExistence type="inferred from homology"/>
<comment type="function">
    <text evidence="1">Mnh complex is a Na(+)/H(+) antiporter involved in Na(+) excretion.</text>
</comment>
<comment type="subunit">
    <text evidence="1">May form a heterooligomeric complex that consists of seven subunits: mnhA1, mnhB1, mnhC1, mnhD1, mnhE1, mnhF1 and mnhG1.</text>
</comment>
<comment type="subcellular location">
    <subcellularLocation>
        <location evidence="3">Cell membrane</location>
        <topology evidence="3">Multi-pass membrane protein</topology>
    </subcellularLocation>
</comment>
<comment type="similarity">
    <text evidence="3">Belongs to the CPA3 antiporters (TC 2.A.63) subunit E family.</text>
</comment>
<reference key="1">
    <citation type="submission" date="2007-06" db="EMBL/GenBank/DDBJ databases">
        <title>Complete sequence of chromosome of Staphylococcus aureus subsp. aureus JH1.</title>
        <authorList>
            <consortium name="US DOE Joint Genome Institute"/>
            <person name="Copeland A."/>
            <person name="Lucas S."/>
            <person name="Lapidus A."/>
            <person name="Barry K."/>
            <person name="Detter J.C."/>
            <person name="Glavina del Rio T."/>
            <person name="Hammon N."/>
            <person name="Israni S."/>
            <person name="Dalin E."/>
            <person name="Tice H."/>
            <person name="Pitluck S."/>
            <person name="Chain P."/>
            <person name="Malfatti S."/>
            <person name="Shin M."/>
            <person name="Vergez L."/>
            <person name="Schmutz J."/>
            <person name="Larimer F."/>
            <person name="Land M."/>
            <person name="Hauser L."/>
            <person name="Kyrpides N."/>
            <person name="Ivanova N."/>
            <person name="Tomasz A."/>
            <person name="Richardson P."/>
        </authorList>
    </citation>
    <scope>NUCLEOTIDE SEQUENCE [LARGE SCALE GENOMIC DNA]</scope>
    <source>
        <strain>JH1</strain>
    </source>
</reference>
<sequence length="159" mass="18319">MAVQLVLNFIIAVFWLFVTNSYTTNNFVLGFIFGLVLVYLLHRVLPGRFYVITLYRIIKLVIIFLIELIKANFDVLKIIIKPSIKNEPGFFVYHTDLKKDWQIVLLSNLITLTPGTVVLGVSDDRTKIYIHAIDFSTKEQEVESIKTSLEKIVREVGEI</sequence>
<protein>
    <recommendedName>
        <fullName>Na(+)/H(+) antiporter subunit E1</fullName>
    </recommendedName>
    <alternativeName>
        <fullName>Mnh complex subunit E1</fullName>
    </alternativeName>
</protein>
<keyword id="KW-0050">Antiport</keyword>
<keyword id="KW-1003">Cell membrane</keyword>
<keyword id="KW-0375">Hydrogen ion transport</keyword>
<keyword id="KW-0406">Ion transport</keyword>
<keyword id="KW-0472">Membrane</keyword>
<keyword id="KW-0915">Sodium</keyword>
<keyword id="KW-0739">Sodium transport</keyword>
<keyword id="KW-0812">Transmembrane</keyword>
<keyword id="KW-1133">Transmembrane helix</keyword>
<keyword id="KW-0813">Transport</keyword>
<accession>A6U055</accession>
<gene>
    <name type="primary">mnhE1</name>
    <name type="ordered locus">SaurJH1_0967</name>
</gene>
<dbReference type="EMBL" id="CP000736">
    <property type="protein sequence ID" value="ABR51823.1"/>
    <property type="molecule type" value="Genomic_DNA"/>
</dbReference>
<dbReference type="SMR" id="A6U055"/>
<dbReference type="KEGG" id="sah:SaurJH1_0967"/>
<dbReference type="HOGENOM" id="CLU_086615_3_2_9"/>
<dbReference type="GO" id="GO:0005886">
    <property type="term" value="C:plasma membrane"/>
    <property type="evidence" value="ECO:0007669"/>
    <property type="project" value="UniProtKB-SubCell"/>
</dbReference>
<dbReference type="GO" id="GO:0015297">
    <property type="term" value="F:antiporter activity"/>
    <property type="evidence" value="ECO:0007669"/>
    <property type="project" value="UniProtKB-KW"/>
</dbReference>
<dbReference type="GO" id="GO:0008324">
    <property type="term" value="F:monoatomic cation transmembrane transporter activity"/>
    <property type="evidence" value="ECO:0007669"/>
    <property type="project" value="InterPro"/>
</dbReference>
<dbReference type="GO" id="GO:1902600">
    <property type="term" value="P:proton transmembrane transport"/>
    <property type="evidence" value="ECO:0007669"/>
    <property type="project" value="UniProtKB-KW"/>
</dbReference>
<dbReference type="GO" id="GO:0006814">
    <property type="term" value="P:sodium ion transport"/>
    <property type="evidence" value="ECO:0007669"/>
    <property type="project" value="UniProtKB-KW"/>
</dbReference>
<dbReference type="InterPro" id="IPR004847">
    <property type="entry name" value="Antiport_suE1"/>
</dbReference>
<dbReference type="InterPro" id="IPR002758">
    <property type="entry name" value="Cation_antiport_E"/>
</dbReference>
<dbReference type="NCBIfam" id="TIGR00942">
    <property type="entry name" value="2a6301s05"/>
    <property type="match status" value="1"/>
</dbReference>
<dbReference type="NCBIfam" id="NF009291">
    <property type="entry name" value="PRK12651.1-1"/>
    <property type="match status" value="1"/>
</dbReference>
<dbReference type="PANTHER" id="PTHR34584">
    <property type="entry name" value="NA(+)/H(+) ANTIPORTER SUBUNIT E1"/>
    <property type="match status" value="1"/>
</dbReference>
<dbReference type="PANTHER" id="PTHR34584:SF1">
    <property type="entry name" value="NA(+)_H(+) ANTIPORTER SUBUNIT E1"/>
    <property type="match status" value="1"/>
</dbReference>
<dbReference type="Pfam" id="PF01899">
    <property type="entry name" value="MNHE"/>
    <property type="match status" value="1"/>
</dbReference>
<dbReference type="PIRSF" id="PIRSF019239">
    <property type="entry name" value="MrpE"/>
    <property type="match status" value="1"/>
</dbReference>